<comment type="function">
    <text evidence="1">Chaperone involved in the correct folding and assembly of outer membrane proteins. Recognizes specific patterns of aromatic residues and the orientation of their side chains, which are found more frequently in integral outer membrane proteins. May act in both early periplasmic and late outer membrane-associated steps of protein maturation.</text>
</comment>
<comment type="catalytic activity">
    <reaction evidence="1">
        <text>[protein]-peptidylproline (omega=180) = [protein]-peptidylproline (omega=0)</text>
        <dbReference type="Rhea" id="RHEA:16237"/>
        <dbReference type="Rhea" id="RHEA-COMP:10747"/>
        <dbReference type="Rhea" id="RHEA-COMP:10748"/>
        <dbReference type="ChEBI" id="CHEBI:83833"/>
        <dbReference type="ChEBI" id="CHEBI:83834"/>
        <dbReference type="EC" id="5.2.1.8"/>
    </reaction>
</comment>
<comment type="subcellular location">
    <subcellularLocation>
        <location evidence="1">Periplasm</location>
    </subcellularLocation>
    <text evidence="1">Is capable of associating with the outer membrane.</text>
</comment>
<comment type="domain">
    <text evidence="1">The PPIase activity resides only in the second parvulin domain. The N-terminal region and the C-terminal tail are necessary and sufficient for the chaperone activity of SurA. The PPIase activity is dispensable for SurA to function as a chaperone. The N-terminal region and the C-terminal tail are also required for porin recognition.</text>
</comment>
<sequence length="434" mass="48687">MKHSKKIVTALLALAMSQTVMAAPVALDRVSVQINDGIILESEIGNMLATVRANANKSNQTLPSEQALRTQVIERLILTRLQLQMAERIGLQIGDLQLDQTIESIAKDQKLTVSQLQQQLENDGLSFSQYREQLREEITLGEIQRIQVQRRIQVSPQEISGLVKLMQEQGLKEVEFQIGHILIDVPSEPSSEQLEASSKRANIVLKRLNEGEDFRSTAIASSSGPKALEGGIWDYMNINEMPTLFAEVVNGAKVGDIIGPIKSGSGFHIIKVMDARGLQTKEVEEVKSRHILLKPSPILSEERAKAMLVNFQKQILSGEADFAELARQYSEDPGSAAKGGELGWSSPDVYVPEFAQTLNSLKENEMSEPFRTTHGWHLTQLMDKRKTDATEQFNSNRAHQLIFRRKFNEELQAWLDEMRSDAYIEVFEPEVNRG</sequence>
<proteinExistence type="inferred from homology"/>
<evidence type="ECO:0000255" key="1">
    <source>
        <dbReference type="HAMAP-Rule" id="MF_01183"/>
    </source>
</evidence>
<gene>
    <name evidence="1" type="primary">surA</name>
    <name type="ordered locus">Sden_2886</name>
</gene>
<feature type="signal peptide" evidence="1">
    <location>
        <begin position="1"/>
        <end position="22"/>
    </location>
</feature>
<feature type="chain" id="PRO_5000114823" description="Chaperone SurA">
    <location>
        <begin position="23"/>
        <end position="434"/>
    </location>
</feature>
<feature type="domain" description="PpiC 1" evidence="1">
    <location>
        <begin position="173"/>
        <end position="274"/>
    </location>
</feature>
<feature type="domain" description="PpiC 2" evidence="1">
    <location>
        <begin position="283"/>
        <end position="383"/>
    </location>
</feature>
<organism>
    <name type="scientific">Shewanella denitrificans (strain OS217 / ATCC BAA-1090 / DSM 15013)</name>
    <dbReference type="NCBI Taxonomy" id="318161"/>
    <lineage>
        <taxon>Bacteria</taxon>
        <taxon>Pseudomonadati</taxon>
        <taxon>Pseudomonadota</taxon>
        <taxon>Gammaproteobacteria</taxon>
        <taxon>Alteromonadales</taxon>
        <taxon>Shewanellaceae</taxon>
        <taxon>Shewanella</taxon>
    </lineage>
</organism>
<keyword id="KW-0143">Chaperone</keyword>
<keyword id="KW-0413">Isomerase</keyword>
<keyword id="KW-0574">Periplasm</keyword>
<keyword id="KW-1185">Reference proteome</keyword>
<keyword id="KW-0677">Repeat</keyword>
<keyword id="KW-0697">Rotamase</keyword>
<keyword id="KW-0732">Signal</keyword>
<dbReference type="EC" id="5.2.1.8" evidence="1"/>
<dbReference type="EMBL" id="CP000302">
    <property type="protein sequence ID" value="ABE56165.1"/>
    <property type="molecule type" value="Genomic_DNA"/>
</dbReference>
<dbReference type="RefSeq" id="WP_011497314.1">
    <property type="nucleotide sequence ID" value="NC_007954.1"/>
</dbReference>
<dbReference type="SMR" id="Q12K61"/>
<dbReference type="STRING" id="318161.Sden_2886"/>
<dbReference type="KEGG" id="sdn:Sden_2886"/>
<dbReference type="eggNOG" id="COG0760">
    <property type="taxonomic scope" value="Bacteria"/>
</dbReference>
<dbReference type="HOGENOM" id="CLU_034646_11_0_6"/>
<dbReference type="OrthoDB" id="14196at2"/>
<dbReference type="Proteomes" id="UP000001982">
    <property type="component" value="Chromosome"/>
</dbReference>
<dbReference type="GO" id="GO:0030288">
    <property type="term" value="C:outer membrane-bounded periplasmic space"/>
    <property type="evidence" value="ECO:0007669"/>
    <property type="project" value="InterPro"/>
</dbReference>
<dbReference type="GO" id="GO:0042277">
    <property type="term" value="F:peptide binding"/>
    <property type="evidence" value="ECO:0007669"/>
    <property type="project" value="InterPro"/>
</dbReference>
<dbReference type="GO" id="GO:0003755">
    <property type="term" value="F:peptidyl-prolyl cis-trans isomerase activity"/>
    <property type="evidence" value="ECO:0007669"/>
    <property type="project" value="UniProtKB-UniRule"/>
</dbReference>
<dbReference type="GO" id="GO:0051082">
    <property type="term" value="F:unfolded protein binding"/>
    <property type="evidence" value="ECO:0007669"/>
    <property type="project" value="UniProtKB-UniRule"/>
</dbReference>
<dbReference type="GO" id="GO:0043165">
    <property type="term" value="P:Gram-negative-bacterium-type cell outer membrane assembly"/>
    <property type="evidence" value="ECO:0007669"/>
    <property type="project" value="InterPro"/>
</dbReference>
<dbReference type="GO" id="GO:0006457">
    <property type="term" value="P:protein folding"/>
    <property type="evidence" value="ECO:0007669"/>
    <property type="project" value="UniProtKB-UniRule"/>
</dbReference>
<dbReference type="GO" id="GO:0050821">
    <property type="term" value="P:protein stabilization"/>
    <property type="evidence" value="ECO:0007669"/>
    <property type="project" value="InterPro"/>
</dbReference>
<dbReference type="Gene3D" id="3.10.50.40">
    <property type="match status" value="2"/>
</dbReference>
<dbReference type="Gene3D" id="1.10.4030.10">
    <property type="entry name" value="Porin chaperone SurA, peptide-binding domain"/>
    <property type="match status" value="1"/>
</dbReference>
<dbReference type="HAMAP" id="MF_01183">
    <property type="entry name" value="Chaperone_SurA"/>
    <property type="match status" value="1"/>
</dbReference>
<dbReference type="InterPro" id="IPR050280">
    <property type="entry name" value="OMP_Chaperone_SurA"/>
</dbReference>
<dbReference type="InterPro" id="IPR046357">
    <property type="entry name" value="PPIase_dom_sf"/>
</dbReference>
<dbReference type="InterPro" id="IPR000297">
    <property type="entry name" value="PPIase_PpiC"/>
</dbReference>
<dbReference type="InterPro" id="IPR023058">
    <property type="entry name" value="PPIase_PpiC_CS"/>
</dbReference>
<dbReference type="InterPro" id="IPR023034">
    <property type="entry name" value="PPIase_SurA"/>
</dbReference>
<dbReference type="InterPro" id="IPR015391">
    <property type="entry name" value="SurA_N"/>
</dbReference>
<dbReference type="InterPro" id="IPR027304">
    <property type="entry name" value="Trigger_fact/SurA_dom_sf"/>
</dbReference>
<dbReference type="NCBIfam" id="NF008038">
    <property type="entry name" value="PRK10770.1"/>
    <property type="match status" value="1"/>
</dbReference>
<dbReference type="PANTHER" id="PTHR47637">
    <property type="entry name" value="CHAPERONE SURA"/>
    <property type="match status" value="1"/>
</dbReference>
<dbReference type="PANTHER" id="PTHR47637:SF1">
    <property type="entry name" value="CHAPERONE SURA"/>
    <property type="match status" value="1"/>
</dbReference>
<dbReference type="Pfam" id="PF00639">
    <property type="entry name" value="Rotamase"/>
    <property type="match status" value="2"/>
</dbReference>
<dbReference type="Pfam" id="PF09312">
    <property type="entry name" value="SurA_N"/>
    <property type="match status" value="1"/>
</dbReference>
<dbReference type="SUPFAM" id="SSF54534">
    <property type="entry name" value="FKBP-like"/>
    <property type="match status" value="2"/>
</dbReference>
<dbReference type="SUPFAM" id="SSF109998">
    <property type="entry name" value="Triger factor/SurA peptide-binding domain-like"/>
    <property type="match status" value="1"/>
</dbReference>
<dbReference type="PROSITE" id="PS01096">
    <property type="entry name" value="PPIC_PPIASE_1"/>
    <property type="match status" value="1"/>
</dbReference>
<dbReference type="PROSITE" id="PS50198">
    <property type="entry name" value="PPIC_PPIASE_2"/>
    <property type="match status" value="2"/>
</dbReference>
<name>SURA_SHEDO</name>
<protein>
    <recommendedName>
        <fullName evidence="1">Chaperone SurA</fullName>
    </recommendedName>
    <alternativeName>
        <fullName evidence="1">Peptidyl-prolyl cis-trans isomerase SurA</fullName>
        <shortName evidence="1">PPIase SurA</shortName>
        <ecNumber evidence="1">5.2.1.8</ecNumber>
    </alternativeName>
    <alternativeName>
        <fullName evidence="1">Rotamase SurA</fullName>
    </alternativeName>
</protein>
<reference key="1">
    <citation type="submission" date="2006-03" db="EMBL/GenBank/DDBJ databases">
        <title>Complete sequence of Shewanella denitrificans OS217.</title>
        <authorList>
            <consortium name="US DOE Joint Genome Institute"/>
            <person name="Copeland A."/>
            <person name="Lucas S."/>
            <person name="Lapidus A."/>
            <person name="Barry K."/>
            <person name="Detter J.C."/>
            <person name="Glavina del Rio T."/>
            <person name="Hammon N."/>
            <person name="Israni S."/>
            <person name="Dalin E."/>
            <person name="Tice H."/>
            <person name="Pitluck S."/>
            <person name="Brettin T."/>
            <person name="Bruce D."/>
            <person name="Han C."/>
            <person name="Tapia R."/>
            <person name="Gilna P."/>
            <person name="Kiss H."/>
            <person name="Schmutz J."/>
            <person name="Larimer F."/>
            <person name="Land M."/>
            <person name="Hauser L."/>
            <person name="Kyrpides N."/>
            <person name="Lykidis A."/>
            <person name="Richardson P."/>
        </authorList>
    </citation>
    <scope>NUCLEOTIDE SEQUENCE [LARGE SCALE GENOMIC DNA]</scope>
    <source>
        <strain>OS217 / ATCC BAA-1090 / DSM 15013</strain>
    </source>
</reference>
<accession>Q12K61</accession>